<feature type="chain" id="PRO_0000314276" description="RNA polymerase II holoenzyme cyclin-like subunit">
    <location>
        <begin position="1"/>
        <end position="319"/>
    </location>
</feature>
<feature type="domain" description="Cyclin N-terminal">
    <location>
        <begin position="53"/>
        <end position="142"/>
    </location>
</feature>
<feature type="region of interest" description="Disordered" evidence="2">
    <location>
        <begin position="237"/>
        <end position="261"/>
    </location>
</feature>
<feature type="compositionally biased region" description="Low complexity" evidence="2">
    <location>
        <begin position="237"/>
        <end position="251"/>
    </location>
</feature>
<feature type="compositionally biased region" description="Basic and acidic residues" evidence="2">
    <location>
        <begin position="252"/>
        <end position="261"/>
    </location>
</feature>
<dbReference type="EMBL" id="AF294431">
    <property type="protein sequence ID" value="AAK30047.1"/>
    <property type="molecule type" value="Genomic_DNA"/>
</dbReference>
<dbReference type="SMR" id="Q9C1M4"/>
<dbReference type="GO" id="GO:0005634">
    <property type="term" value="C:nucleus"/>
    <property type="evidence" value="ECO:0007669"/>
    <property type="project" value="UniProtKB-SubCell"/>
</dbReference>
<dbReference type="GO" id="GO:0016538">
    <property type="term" value="F:cyclin-dependent protein serine/threonine kinase regulator activity"/>
    <property type="evidence" value="ECO:0007669"/>
    <property type="project" value="InterPro"/>
</dbReference>
<dbReference type="GO" id="GO:0006357">
    <property type="term" value="P:regulation of transcription by RNA polymerase II"/>
    <property type="evidence" value="ECO:0007669"/>
    <property type="project" value="InterPro"/>
</dbReference>
<dbReference type="CDD" id="cd20513">
    <property type="entry name" value="CYCLIN_CCNC_rpt1"/>
    <property type="match status" value="1"/>
</dbReference>
<dbReference type="CDD" id="cd20546">
    <property type="entry name" value="CYCLIN_SpCG1C_ScCTK2-like_rpt2"/>
    <property type="match status" value="1"/>
</dbReference>
<dbReference type="Gene3D" id="1.10.472.10">
    <property type="entry name" value="Cyclin-like"/>
    <property type="match status" value="2"/>
</dbReference>
<dbReference type="InterPro" id="IPR013763">
    <property type="entry name" value="Cyclin-like_dom"/>
</dbReference>
<dbReference type="InterPro" id="IPR036915">
    <property type="entry name" value="Cyclin-like_sf"/>
</dbReference>
<dbReference type="InterPro" id="IPR043198">
    <property type="entry name" value="Cyclin/Ssn8"/>
</dbReference>
<dbReference type="InterPro" id="IPR006671">
    <property type="entry name" value="Cyclin_N"/>
</dbReference>
<dbReference type="PANTHER" id="PTHR10026">
    <property type="entry name" value="CYCLIN"/>
    <property type="match status" value="1"/>
</dbReference>
<dbReference type="Pfam" id="PF00134">
    <property type="entry name" value="Cyclin_N"/>
    <property type="match status" value="1"/>
</dbReference>
<dbReference type="PIRSF" id="PIRSF028758">
    <property type="entry name" value="Cyclin, C/H/G types"/>
    <property type="match status" value="1"/>
</dbReference>
<dbReference type="SMART" id="SM00385">
    <property type="entry name" value="CYCLIN"/>
    <property type="match status" value="1"/>
</dbReference>
<dbReference type="SUPFAM" id="SSF47954">
    <property type="entry name" value="Cyclin-like"/>
    <property type="match status" value="2"/>
</dbReference>
<accession>Q9C1M4</accession>
<proteinExistence type="evidence at protein level"/>
<name>SSN8_GIBMO</name>
<protein>
    <recommendedName>
        <fullName>RNA polymerase II holoenzyme cyclin-like subunit</fullName>
    </recommendedName>
</protein>
<reference key="1">
    <citation type="journal article" date="2001" name="Appl. Environ. Microbiol.">
        <title>Regulation of fumonisin B(1) biosynthesis and conidiation in Fusarium verticillioides by a cyclin-like (C-type) gene, FCC1.</title>
        <authorList>
            <person name="Shim W.B."/>
            <person name="Woloshuk C.P."/>
        </authorList>
    </citation>
    <scope>NUCLEOTIDE SEQUENCE [GENOMIC DNA]</scope>
    <scope>FUNCTION</scope>
</reference>
<reference key="2">
    <citation type="journal article" date="2006" name="Fungal Genet. Biol.">
        <title>Fck1, a C-type cyclin-dependent kinase, interacts with Fcc1 to regulate development and secondary metabolism in Fusarium verticillioides.</title>
        <authorList>
            <person name="Bluhm B.H."/>
            <person name="Woloshuk C.P."/>
        </authorList>
    </citation>
    <scope>INTERACTION WITH SSN3</scope>
</reference>
<comment type="function">
    <text evidence="1 3">Component of the SRB8-11 complex. The SRB8-11 complex is a regulatory module of the Mediator complex which is itself involved in regulation of basal and activated RNA polymerase II-dependent transcription. The SRB8-11 complex may be involved in the transcriptional repression of a subset of genes regulated by Mediator. It may inhibit the association of the Mediator complex with RNA polymerase II to form the holoenzyme complex. The SRB8-11 complex phosphorylates the C-terminal domain (CTD) of the largest subunit of RNA polymerase II (By similarity). May play a role in signal transduction pathways regulating secondary metabolism and fungal development (conidiation).</text>
</comment>
<comment type="subunit">
    <text evidence="1 4">Component of the SRB8-11 complex, a regulatory module of the Mediator complex (By similarity). Interacts with SSN3/FCK1.</text>
</comment>
<comment type="subcellular location">
    <subcellularLocation>
        <location evidence="5">Nucleus</location>
    </subcellularLocation>
</comment>
<comment type="similarity">
    <text evidence="5">Belongs to the cyclin family. Cyclin C subfamily.</text>
</comment>
<gene>
    <name type="primary">SSN8</name>
    <name type="synonym">FCC1</name>
</gene>
<evidence type="ECO:0000250" key="1"/>
<evidence type="ECO:0000256" key="2">
    <source>
        <dbReference type="SAM" id="MobiDB-lite"/>
    </source>
</evidence>
<evidence type="ECO:0000269" key="3">
    <source>
    </source>
</evidence>
<evidence type="ECO:0000269" key="4">
    <source>
    </source>
</evidence>
<evidence type="ECO:0000305" key="5"/>
<sequence length="319" mass="36714">MSANYWHSTQCRFWSFTKEQLVTMRQKLEEDNAELVRMFPLPQQRRLYIYFNQQLIRLAKRLTIRQQSMATAQVYMKRFYSKVEIRRTNPYLVIATAIYLACKIEESPQHIRLIVTEARQMWGDLVAIDTSKLGECEFFMISEMRSQLIVFQPYRTITALRNELSLVDDEVQLARSVINDHFMTDLPLLYPPHIIAMVAILLALVLRPNNSGPGQSTSGAAAAAGLAAAQQALMRAQGQQAQGGMPEPAAAEPKEKRQQDRVSRVQKFAKWLVDSNVEIASMVDATQEIISFYECYEHYNDKLTREQINRFVKARGLDK</sequence>
<keyword id="KW-0010">Activator</keyword>
<keyword id="KW-0195">Cyclin</keyword>
<keyword id="KW-0539">Nucleus</keyword>
<keyword id="KW-0678">Repressor</keyword>
<keyword id="KW-0804">Transcription</keyword>
<keyword id="KW-0805">Transcription regulation</keyword>
<organism>
    <name type="scientific">Gibberella moniliformis</name>
    <name type="common">Maize ear and stalk rot fungus</name>
    <name type="synonym">Fusarium verticillioides</name>
    <dbReference type="NCBI Taxonomy" id="117187"/>
    <lineage>
        <taxon>Eukaryota</taxon>
        <taxon>Fungi</taxon>
        <taxon>Dikarya</taxon>
        <taxon>Ascomycota</taxon>
        <taxon>Pezizomycotina</taxon>
        <taxon>Sordariomycetes</taxon>
        <taxon>Hypocreomycetidae</taxon>
        <taxon>Hypocreales</taxon>
        <taxon>Nectriaceae</taxon>
        <taxon>Fusarium</taxon>
        <taxon>Fusarium fujikuroi species complex</taxon>
    </lineage>
</organism>